<gene>
    <name evidence="1" type="primary">dltA</name>
    <name type="ordered locus">BT9727_1259</name>
</gene>
<feature type="chain" id="PRO_1000025528" description="D-alanine--D-alanyl carrier protein ligase">
    <location>
        <begin position="1"/>
        <end position="504"/>
    </location>
</feature>
<feature type="binding site" evidence="1">
    <location>
        <begin position="152"/>
        <end position="153"/>
    </location>
    <ligand>
        <name>ATP</name>
        <dbReference type="ChEBI" id="CHEBI:30616"/>
    </ligand>
</feature>
<feature type="binding site" evidence="1">
    <location>
        <position position="197"/>
    </location>
    <ligand>
        <name>D-alanine</name>
        <dbReference type="ChEBI" id="CHEBI:57416"/>
    </ligand>
</feature>
<feature type="binding site" evidence="1">
    <location>
        <begin position="292"/>
        <end position="297"/>
    </location>
    <ligand>
        <name>ATP</name>
        <dbReference type="ChEBI" id="CHEBI:30616"/>
    </ligand>
</feature>
<feature type="binding site" evidence="1">
    <location>
        <position position="301"/>
    </location>
    <ligand>
        <name>D-alanine</name>
        <dbReference type="ChEBI" id="CHEBI:57416"/>
    </ligand>
</feature>
<feature type="binding site" evidence="1">
    <location>
        <position position="383"/>
    </location>
    <ligand>
        <name>ATP</name>
        <dbReference type="ChEBI" id="CHEBI:30616"/>
    </ligand>
</feature>
<feature type="binding site" evidence="1">
    <location>
        <begin position="394"/>
        <end position="397"/>
    </location>
    <ligand>
        <name>ATP</name>
        <dbReference type="ChEBI" id="CHEBI:30616"/>
    </ligand>
</feature>
<feature type="binding site" evidence="1">
    <location>
        <position position="492"/>
    </location>
    <ligand>
        <name>ATP</name>
        <dbReference type="ChEBI" id="CHEBI:30616"/>
    </ligand>
</feature>
<feature type="binding site" evidence="1">
    <location>
        <position position="492"/>
    </location>
    <ligand>
        <name>D-alanine</name>
        <dbReference type="ChEBI" id="CHEBI:57416"/>
    </ligand>
</feature>
<name>DLTA_BACHK</name>
<proteinExistence type="inferred from homology"/>
<dbReference type="EC" id="6.2.1.54" evidence="1"/>
<dbReference type="EMBL" id="AE017355">
    <property type="protein sequence ID" value="AAT59405.1"/>
    <property type="molecule type" value="Genomic_DNA"/>
</dbReference>
<dbReference type="RefSeq" id="WP_000770518.1">
    <property type="nucleotide sequence ID" value="NC_005957.1"/>
</dbReference>
<dbReference type="RefSeq" id="YP_035594.1">
    <property type="nucleotide sequence ID" value="NC_005957.1"/>
</dbReference>
<dbReference type="SMR" id="Q6HLH7"/>
<dbReference type="KEGG" id="btk:BT9727_1259"/>
<dbReference type="PATRIC" id="fig|281309.8.peg.1324"/>
<dbReference type="HOGENOM" id="CLU_000022_2_12_9"/>
<dbReference type="UniPathway" id="UPA00556"/>
<dbReference type="Proteomes" id="UP000001301">
    <property type="component" value="Chromosome"/>
</dbReference>
<dbReference type="GO" id="GO:0005737">
    <property type="term" value="C:cytoplasm"/>
    <property type="evidence" value="ECO:0007669"/>
    <property type="project" value="UniProtKB-SubCell"/>
</dbReference>
<dbReference type="GO" id="GO:0005524">
    <property type="term" value="F:ATP binding"/>
    <property type="evidence" value="ECO:0007669"/>
    <property type="project" value="UniProtKB-KW"/>
</dbReference>
<dbReference type="GO" id="GO:0047473">
    <property type="term" value="F:D-alanine [D-alanyl carrier protein] ligase activity"/>
    <property type="evidence" value="ECO:0007669"/>
    <property type="project" value="UniProtKB-UniRule"/>
</dbReference>
<dbReference type="GO" id="GO:0070395">
    <property type="term" value="P:lipoteichoic acid biosynthetic process"/>
    <property type="evidence" value="ECO:0007669"/>
    <property type="project" value="UniProtKB-UniRule"/>
</dbReference>
<dbReference type="CDD" id="cd05945">
    <property type="entry name" value="DltA"/>
    <property type="match status" value="1"/>
</dbReference>
<dbReference type="FunFam" id="3.30.300.30:FF:000012">
    <property type="entry name" value="D-alanine--D-alanyl carrier protein ligase"/>
    <property type="match status" value="1"/>
</dbReference>
<dbReference type="FunFam" id="3.40.50.12780:FF:000015">
    <property type="entry name" value="D-alanine--D-alanyl carrier protein ligase"/>
    <property type="match status" value="1"/>
</dbReference>
<dbReference type="Gene3D" id="3.30.300.30">
    <property type="match status" value="1"/>
</dbReference>
<dbReference type="Gene3D" id="3.40.50.12780">
    <property type="entry name" value="N-terminal domain of ligase-like"/>
    <property type="match status" value="1"/>
</dbReference>
<dbReference type="HAMAP" id="MF_00593">
    <property type="entry name" value="DltA"/>
    <property type="match status" value="1"/>
</dbReference>
<dbReference type="InterPro" id="IPR010071">
    <property type="entry name" value="AA_adenyl_dom"/>
</dbReference>
<dbReference type="InterPro" id="IPR025110">
    <property type="entry name" value="AMP-bd_C"/>
</dbReference>
<dbReference type="InterPro" id="IPR045851">
    <property type="entry name" value="AMP-bd_C_sf"/>
</dbReference>
<dbReference type="InterPro" id="IPR020845">
    <property type="entry name" value="AMP-binding_CS"/>
</dbReference>
<dbReference type="InterPro" id="IPR000873">
    <property type="entry name" value="AMP-dep_synth/lig_dom"/>
</dbReference>
<dbReference type="InterPro" id="IPR042099">
    <property type="entry name" value="ANL_N_sf"/>
</dbReference>
<dbReference type="InterPro" id="IPR010072">
    <property type="entry name" value="DltA"/>
</dbReference>
<dbReference type="InterPro" id="IPR044507">
    <property type="entry name" value="DltA-like"/>
</dbReference>
<dbReference type="NCBIfam" id="TIGR01733">
    <property type="entry name" value="AA-adenyl-dom"/>
    <property type="match status" value="1"/>
</dbReference>
<dbReference type="NCBIfam" id="TIGR01734">
    <property type="entry name" value="D-ala-DACP-lig"/>
    <property type="match status" value="1"/>
</dbReference>
<dbReference type="NCBIfam" id="NF003417">
    <property type="entry name" value="PRK04813.1"/>
    <property type="match status" value="1"/>
</dbReference>
<dbReference type="PANTHER" id="PTHR45398">
    <property type="match status" value="1"/>
</dbReference>
<dbReference type="PANTHER" id="PTHR45398:SF1">
    <property type="entry name" value="ENZYME, PUTATIVE (JCVI)-RELATED"/>
    <property type="match status" value="1"/>
</dbReference>
<dbReference type="Pfam" id="PF00501">
    <property type="entry name" value="AMP-binding"/>
    <property type="match status" value="1"/>
</dbReference>
<dbReference type="Pfam" id="PF13193">
    <property type="entry name" value="AMP-binding_C"/>
    <property type="match status" value="1"/>
</dbReference>
<dbReference type="SUPFAM" id="SSF56801">
    <property type="entry name" value="Acetyl-CoA synthetase-like"/>
    <property type="match status" value="1"/>
</dbReference>
<dbReference type="PROSITE" id="PS00455">
    <property type="entry name" value="AMP_BINDING"/>
    <property type="match status" value="1"/>
</dbReference>
<keyword id="KW-0067">ATP-binding</keyword>
<keyword id="KW-0963">Cytoplasm</keyword>
<keyword id="KW-0436">Ligase</keyword>
<keyword id="KW-0547">Nucleotide-binding</keyword>
<protein>
    <recommendedName>
        <fullName evidence="1">D-alanine--D-alanyl carrier protein ligase</fullName>
        <shortName evidence="1">DCL</shortName>
        <ecNumber evidence="1">6.2.1.54</ecNumber>
    </recommendedName>
    <alternativeName>
        <fullName evidence="1">D-alanine--poly(phosphoribitol) ligase subunit 1</fullName>
    </alternativeName>
    <alternativeName>
        <fullName evidence="1">D-alanine-activating enzyme</fullName>
        <shortName evidence="1">DAE</shortName>
    </alternativeName>
</protein>
<reference key="1">
    <citation type="journal article" date="2006" name="J. Bacteriol.">
        <title>Pathogenomic sequence analysis of Bacillus cereus and Bacillus thuringiensis isolates closely related to Bacillus anthracis.</title>
        <authorList>
            <person name="Han C.S."/>
            <person name="Xie G."/>
            <person name="Challacombe J.F."/>
            <person name="Altherr M.R."/>
            <person name="Bhotika S.S."/>
            <person name="Bruce D."/>
            <person name="Campbell C.S."/>
            <person name="Campbell M.L."/>
            <person name="Chen J."/>
            <person name="Chertkov O."/>
            <person name="Cleland C."/>
            <person name="Dimitrijevic M."/>
            <person name="Doggett N.A."/>
            <person name="Fawcett J.J."/>
            <person name="Glavina T."/>
            <person name="Goodwin L.A."/>
            <person name="Hill K.K."/>
            <person name="Hitchcock P."/>
            <person name="Jackson P.J."/>
            <person name="Keim P."/>
            <person name="Kewalramani A.R."/>
            <person name="Longmire J."/>
            <person name="Lucas S."/>
            <person name="Malfatti S."/>
            <person name="McMurry K."/>
            <person name="Meincke L.J."/>
            <person name="Misra M."/>
            <person name="Moseman B.L."/>
            <person name="Mundt M."/>
            <person name="Munk A.C."/>
            <person name="Okinaka R.T."/>
            <person name="Parson-Quintana B."/>
            <person name="Reilly L.P."/>
            <person name="Richardson P."/>
            <person name="Robinson D.L."/>
            <person name="Rubin E."/>
            <person name="Saunders E."/>
            <person name="Tapia R."/>
            <person name="Tesmer J.G."/>
            <person name="Thayer N."/>
            <person name="Thompson L.S."/>
            <person name="Tice H."/>
            <person name="Ticknor L.O."/>
            <person name="Wills P.L."/>
            <person name="Brettin T.S."/>
            <person name="Gilna P."/>
        </authorList>
    </citation>
    <scope>NUCLEOTIDE SEQUENCE [LARGE SCALE GENOMIC DNA]</scope>
    <source>
        <strain>97-27</strain>
    </source>
</reference>
<organism>
    <name type="scientific">Bacillus thuringiensis subsp. konkukian (strain 97-27)</name>
    <dbReference type="NCBI Taxonomy" id="281309"/>
    <lineage>
        <taxon>Bacteria</taxon>
        <taxon>Bacillati</taxon>
        <taxon>Bacillota</taxon>
        <taxon>Bacilli</taxon>
        <taxon>Bacillales</taxon>
        <taxon>Bacillaceae</taxon>
        <taxon>Bacillus</taxon>
        <taxon>Bacillus cereus group</taxon>
    </lineage>
</organism>
<sequence length="504" mass="56506">MKLLEQIEKWAIETPDQTAFVWRDAKITYKQLKEDSDALAHWISSEYPDDRSPIMVYGHMQPEMIINFLGCVKAGHAYIPVDLSIPADRVQRIAENSGAKLLLSAAAVTVTDLPVRIVSEDNLKDIFFTHKGNTPNPEHAVKGDENFYIIYTSGSTGNPKGVQITYNCLVSFTQWAVEDFNLQTGQVFLNQAPFSFDLSVMDIYPSLVTGGTLWAIDKDMIARPKDLFASLEQSDIQVWTSTPSFAEMCLMEASFSESMLPNMKTFLFCGEVLPNEVARKLIERFPKATIMNTYGPTEATVAVTGIHVTEEVLDQYKSLPVGYCKSDCRLLIMKEDGTIAPDGEKGEIVIVGPSVSVGYLGSPELTEKAFTMIDGERAYKTGDAGYVENGLLFYNGRLDFQIKLHGYRMELEEIEHHLRACSYVEGAVIVPIKKGEKYDYLLAVVVPGEHSFEKEFKLTSAIKKELNERLPNYMIPRKFMYQSSIPMTPNGKVDRKKLLSEVTA</sequence>
<accession>Q6HLH7</accession>
<comment type="function">
    <text evidence="1">Catalyzes the first step in the D-alanylation of lipoteichoic acid (LTA), the activation of D-alanine and its transfer onto the D-alanyl carrier protein (Dcp) DltC. In an ATP-dependent two-step reaction, forms a high energy D-alanyl-AMP intermediate, followed by transfer of the D-alanyl residue as a thiol ester to the phosphopantheinyl prosthetic group of the Dcp. D-alanylation of LTA plays an important role in modulating the properties of the cell wall in Gram-positive bacteria, influencing the net charge of the cell wall.</text>
</comment>
<comment type="catalytic activity">
    <reaction evidence="1">
        <text>holo-[D-alanyl-carrier protein] + D-alanine + ATP = D-alanyl-[D-alanyl-carrier protein] + AMP + diphosphate</text>
        <dbReference type="Rhea" id="RHEA:55132"/>
        <dbReference type="Rhea" id="RHEA-COMP:14102"/>
        <dbReference type="Rhea" id="RHEA-COMP:14103"/>
        <dbReference type="ChEBI" id="CHEBI:30616"/>
        <dbReference type="ChEBI" id="CHEBI:33019"/>
        <dbReference type="ChEBI" id="CHEBI:57416"/>
        <dbReference type="ChEBI" id="CHEBI:64479"/>
        <dbReference type="ChEBI" id="CHEBI:138620"/>
        <dbReference type="ChEBI" id="CHEBI:456215"/>
        <dbReference type="EC" id="6.2.1.54"/>
    </reaction>
</comment>
<comment type="pathway">
    <text evidence="1">Cell wall biogenesis; lipoteichoic acid biosynthesis.</text>
</comment>
<comment type="subcellular location">
    <subcellularLocation>
        <location evidence="1">Cytoplasm</location>
    </subcellularLocation>
</comment>
<comment type="similarity">
    <text evidence="1">Belongs to the ATP-dependent AMP-binding enzyme family. DltA subfamily.</text>
</comment>
<evidence type="ECO:0000255" key="1">
    <source>
        <dbReference type="HAMAP-Rule" id="MF_00593"/>
    </source>
</evidence>